<protein>
    <recommendedName>
        <fullName evidence="1">Glycerol kinase</fullName>
        <ecNumber evidence="1">2.7.1.30</ecNumber>
    </recommendedName>
    <alternativeName>
        <fullName evidence="1">ATP:glycerol 3-phosphotransferase</fullName>
    </alternativeName>
    <alternativeName>
        <fullName evidence="1">Glycerokinase</fullName>
        <shortName evidence="1">GK</shortName>
    </alternativeName>
</protein>
<reference key="1">
    <citation type="journal article" date="2001" name="Lancet">
        <title>Whole genome sequencing of meticillin-resistant Staphylococcus aureus.</title>
        <authorList>
            <person name="Kuroda M."/>
            <person name="Ohta T."/>
            <person name="Uchiyama I."/>
            <person name="Baba T."/>
            <person name="Yuzawa H."/>
            <person name="Kobayashi I."/>
            <person name="Cui L."/>
            <person name="Oguchi A."/>
            <person name="Aoki K."/>
            <person name="Nagai Y."/>
            <person name="Lian J.-Q."/>
            <person name="Ito T."/>
            <person name="Kanamori M."/>
            <person name="Matsumaru H."/>
            <person name="Maruyama A."/>
            <person name="Murakami H."/>
            <person name="Hosoyama A."/>
            <person name="Mizutani-Ui Y."/>
            <person name="Takahashi N.K."/>
            <person name="Sawano T."/>
            <person name="Inoue R."/>
            <person name="Kaito C."/>
            <person name="Sekimizu K."/>
            <person name="Hirakawa H."/>
            <person name="Kuhara S."/>
            <person name="Goto S."/>
            <person name="Yabuzaki J."/>
            <person name="Kanehisa M."/>
            <person name="Yamashita A."/>
            <person name="Oshima K."/>
            <person name="Furuya K."/>
            <person name="Yoshino C."/>
            <person name="Shiba T."/>
            <person name="Hattori M."/>
            <person name="Ogasawara N."/>
            <person name="Hayashi H."/>
            <person name="Hiramatsu K."/>
        </authorList>
    </citation>
    <scope>NUCLEOTIDE SEQUENCE [LARGE SCALE GENOMIC DNA]</scope>
    <source>
        <strain>N315</strain>
    </source>
</reference>
<reference key="2">
    <citation type="journal article" date="2005" name="J. Microbiol. Methods">
        <title>Correlation of proteomic and transcriptomic profiles of Staphylococcus aureus during the post-exponential phase of growth.</title>
        <authorList>
            <person name="Scherl A."/>
            <person name="Francois P."/>
            <person name="Bento M."/>
            <person name="Deshusses J.M."/>
            <person name="Charbonnier Y."/>
            <person name="Converset V."/>
            <person name="Huyghe A."/>
            <person name="Walter N."/>
            <person name="Hoogland C."/>
            <person name="Appel R.D."/>
            <person name="Sanchez J.-C."/>
            <person name="Zimmermann-Ivol C.G."/>
            <person name="Corthals G.L."/>
            <person name="Hochstrasser D.F."/>
            <person name="Schrenzel J."/>
        </authorList>
    </citation>
    <scope>IDENTIFICATION BY MASS SPECTROMETRY</scope>
    <source>
        <strain>N315</strain>
    </source>
</reference>
<reference key="3">
    <citation type="submission" date="2007-10" db="UniProtKB">
        <title>Shotgun proteomic analysis of total and membrane protein extracts of S. aureus strain N315.</title>
        <authorList>
            <person name="Vaezzadeh A.R."/>
            <person name="Deshusses J."/>
            <person name="Lescuyer P."/>
            <person name="Hochstrasser D.F."/>
        </authorList>
    </citation>
    <scope>IDENTIFICATION BY MASS SPECTROMETRY [LARGE SCALE ANALYSIS]</scope>
    <source>
        <strain>N315</strain>
    </source>
</reference>
<sequence>MEKYILSIDQGTTSSRAILFNQKGEIAGVAQREFKQYFPQSGWVEHDANEIWTSVLAVMTEVINENDVRADQIAGIGITNQRETTVVWDKHTGRPIYHAIVWQSRQTQSICSELKQQGYEQTFRDKTGLLLDPYFAGTKVKWILDNVEGAREKAENGDLLFGTIDTWLVWKLSGKAAHITDYSNASRTLMFNIHDLEWDDELLELLTVPKNMLPEVKPSSEIYGKTIDYHFYGQEVPIAGVAGDQQAALFGQACFECGDVKNTYGTGGFMLMNTGDKAVKSESGLLTTIAYGIDGKVNYALEGSIFVSGSAIQWLRDGLRMINSAPQSESYATRVDSTEGVYVVPAFVGLGTPYWDSEARGAIFGLTRGTEKEHFIRATLESLCYQTRDVMEAMSKDSGIDVQSLRVDGGAVKNNFIMQFQADIVNTSVERPEIQETTALGAAFLAGLAVGFWESKDDIAKNWKLEEKFDPKMDEGEREKLYRGWKKAVEATQVFKTE</sequence>
<feature type="chain" id="PRO_0000059491" description="Glycerol kinase">
    <location>
        <begin position="1"/>
        <end position="498"/>
    </location>
</feature>
<feature type="binding site" evidence="1">
    <location>
        <position position="12"/>
    </location>
    <ligand>
        <name>ADP</name>
        <dbReference type="ChEBI" id="CHEBI:456216"/>
    </ligand>
</feature>
<feature type="binding site" evidence="1">
    <location>
        <position position="12"/>
    </location>
    <ligand>
        <name>ATP</name>
        <dbReference type="ChEBI" id="CHEBI:30616"/>
    </ligand>
</feature>
<feature type="binding site" evidence="1">
    <location>
        <position position="12"/>
    </location>
    <ligand>
        <name>sn-glycerol 3-phosphate</name>
        <dbReference type="ChEBI" id="CHEBI:57597"/>
    </ligand>
</feature>
<feature type="binding site" evidence="1">
    <location>
        <position position="13"/>
    </location>
    <ligand>
        <name>ATP</name>
        <dbReference type="ChEBI" id="CHEBI:30616"/>
    </ligand>
</feature>
<feature type="binding site" evidence="1">
    <location>
        <position position="14"/>
    </location>
    <ligand>
        <name>ATP</name>
        <dbReference type="ChEBI" id="CHEBI:30616"/>
    </ligand>
</feature>
<feature type="binding site" evidence="1">
    <location>
        <position position="16"/>
    </location>
    <ligand>
        <name>ADP</name>
        <dbReference type="ChEBI" id="CHEBI:456216"/>
    </ligand>
</feature>
<feature type="binding site" evidence="1">
    <location>
        <position position="82"/>
    </location>
    <ligand>
        <name>glycerol</name>
        <dbReference type="ChEBI" id="CHEBI:17754"/>
    </ligand>
</feature>
<feature type="binding site" evidence="1">
    <location>
        <position position="82"/>
    </location>
    <ligand>
        <name>sn-glycerol 3-phosphate</name>
        <dbReference type="ChEBI" id="CHEBI:57597"/>
    </ligand>
</feature>
<feature type="binding site" evidence="1">
    <location>
        <position position="83"/>
    </location>
    <ligand>
        <name>glycerol</name>
        <dbReference type="ChEBI" id="CHEBI:17754"/>
    </ligand>
</feature>
<feature type="binding site" evidence="1">
    <location>
        <position position="83"/>
    </location>
    <ligand>
        <name>sn-glycerol 3-phosphate</name>
        <dbReference type="ChEBI" id="CHEBI:57597"/>
    </ligand>
</feature>
<feature type="binding site" evidence="1">
    <location>
        <position position="134"/>
    </location>
    <ligand>
        <name>glycerol</name>
        <dbReference type="ChEBI" id="CHEBI:17754"/>
    </ligand>
</feature>
<feature type="binding site" evidence="1">
    <location>
        <position position="134"/>
    </location>
    <ligand>
        <name>sn-glycerol 3-phosphate</name>
        <dbReference type="ChEBI" id="CHEBI:57597"/>
    </ligand>
</feature>
<feature type="binding site" evidence="1">
    <location>
        <position position="244"/>
    </location>
    <ligand>
        <name>glycerol</name>
        <dbReference type="ChEBI" id="CHEBI:17754"/>
    </ligand>
</feature>
<feature type="binding site" evidence="1">
    <location>
        <position position="244"/>
    </location>
    <ligand>
        <name>sn-glycerol 3-phosphate</name>
        <dbReference type="ChEBI" id="CHEBI:57597"/>
    </ligand>
</feature>
<feature type="binding site" evidence="1">
    <location>
        <position position="245"/>
    </location>
    <ligand>
        <name>glycerol</name>
        <dbReference type="ChEBI" id="CHEBI:17754"/>
    </ligand>
</feature>
<feature type="binding site" evidence="1">
    <location>
        <position position="266"/>
    </location>
    <ligand>
        <name>ADP</name>
        <dbReference type="ChEBI" id="CHEBI:456216"/>
    </ligand>
</feature>
<feature type="binding site" evidence="1">
    <location>
        <position position="266"/>
    </location>
    <ligand>
        <name>ATP</name>
        <dbReference type="ChEBI" id="CHEBI:30616"/>
    </ligand>
</feature>
<feature type="binding site" evidence="1">
    <location>
        <position position="309"/>
    </location>
    <ligand>
        <name>ADP</name>
        <dbReference type="ChEBI" id="CHEBI:456216"/>
    </ligand>
</feature>
<feature type="binding site" evidence="1">
    <location>
        <position position="309"/>
    </location>
    <ligand>
        <name>ATP</name>
        <dbReference type="ChEBI" id="CHEBI:30616"/>
    </ligand>
</feature>
<feature type="binding site" evidence="1">
    <location>
        <position position="313"/>
    </location>
    <ligand>
        <name>ATP</name>
        <dbReference type="ChEBI" id="CHEBI:30616"/>
    </ligand>
</feature>
<feature type="binding site" evidence="1">
    <location>
        <position position="410"/>
    </location>
    <ligand>
        <name>ADP</name>
        <dbReference type="ChEBI" id="CHEBI:456216"/>
    </ligand>
</feature>
<feature type="binding site" evidence="1">
    <location>
        <position position="410"/>
    </location>
    <ligand>
        <name>ATP</name>
        <dbReference type="ChEBI" id="CHEBI:30616"/>
    </ligand>
</feature>
<feature type="binding site" evidence="1">
    <location>
        <position position="414"/>
    </location>
    <ligand>
        <name>ADP</name>
        <dbReference type="ChEBI" id="CHEBI:456216"/>
    </ligand>
</feature>
<feature type="modified residue" description="Phosphohistidine; by HPr" evidence="1">
    <location>
        <position position="230"/>
    </location>
</feature>
<gene>
    <name evidence="1" type="primary">glpK</name>
    <name type="ordered locus">SA1141</name>
</gene>
<organism>
    <name type="scientific">Staphylococcus aureus (strain N315)</name>
    <dbReference type="NCBI Taxonomy" id="158879"/>
    <lineage>
        <taxon>Bacteria</taxon>
        <taxon>Bacillati</taxon>
        <taxon>Bacillota</taxon>
        <taxon>Bacilli</taxon>
        <taxon>Bacillales</taxon>
        <taxon>Staphylococcaceae</taxon>
        <taxon>Staphylococcus</taxon>
    </lineage>
</organism>
<dbReference type="EC" id="2.7.1.30" evidence="1"/>
<dbReference type="EMBL" id="BA000018">
    <property type="protein sequence ID" value="BAB42395.1"/>
    <property type="molecule type" value="Genomic_DNA"/>
</dbReference>
<dbReference type="PIR" id="G89904">
    <property type="entry name" value="G89904"/>
</dbReference>
<dbReference type="RefSeq" id="WP_000417372.1">
    <property type="nucleotide sequence ID" value="NC_002745.2"/>
</dbReference>
<dbReference type="SMR" id="P99113"/>
<dbReference type="EnsemblBacteria" id="BAB42395">
    <property type="protein sequence ID" value="BAB42395"/>
    <property type="gene ID" value="BAB42395"/>
</dbReference>
<dbReference type="KEGG" id="sau:SA1141"/>
<dbReference type="HOGENOM" id="CLU_009281_2_3_9"/>
<dbReference type="UniPathway" id="UPA00618">
    <property type="reaction ID" value="UER00672"/>
</dbReference>
<dbReference type="GO" id="GO:0005829">
    <property type="term" value="C:cytosol"/>
    <property type="evidence" value="ECO:0007669"/>
    <property type="project" value="TreeGrafter"/>
</dbReference>
<dbReference type="GO" id="GO:0005524">
    <property type="term" value="F:ATP binding"/>
    <property type="evidence" value="ECO:0007669"/>
    <property type="project" value="UniProtKB-UniRule"/>
</dbReference>
<dbReference type="GO" id="GO:0004370">
    <property type="term" value="F:glycerol kinase activity"/>
    <property type="evidence" value="ECO:0000250"/>
    <property type="project" value="UniProtKB"/>
</dbReference>
<dbReference type="GO" id="GO:0019563">
    <property type="term" value="P:glycerol catabolic process"/>
    <property type="evidence" value="ECO:0007669"/>
    <property type="project" value="UniProtKB-UniRule"/>
</dbReference>
<dbReference type="GO" id="GO:0006071">
    <property type="term" value="P:glycerol metabolic process"/>
    <property type="evidence" value="ECO:0000250"/>
    <property type="project" value="UniProtKB"/>
</dbReference>
<dbReference type="GO" id="GO:0006072">
    <property type="term" value="P:glycerol-3-phosphate metabolic process"/>
    <property type="evidence" value="ECO:0007669"/>
    <property type="project" value="InterPro"/>
</dbReference>
<dbReference type="CDD" id="cd07786">
    <property type="entry name" value="FGGY_EcGK_like"/>
    <property type="match status" value="1"/>
</dbReference>
<dbReference type="FunFam" id="3.30.420.40:FF:000007">
    <property type="entry name" value="Glycerol kinase"/>
    <property type="match status" value="1"/>
</dbReference>
<dbReference type="FunFam" id="3.30.420.40:FF:000008">
    <property type="entry name" value="Glycerol kinase"/>
    <property type="match status" value="1"/>
</dbReference>
<dbReference type="Gene3D" id="3.30.420.40">
    <property type="match status" value="2"/>
</dbReference>
<dbReference type="HAMAP" id="MF_00186">
    <property type="entry name" value="Glycerol_kin"/>
    <property type="match status" value="1"/>
</dbReference>
<dbReference type="InterPro" id="IPR043129">
    <property type="entry name" value="ATPase_NBD"/>
</dbReference>
<dbReference type="InterPro" id="IPR000577">
    <property type="entry name" value="Carb_kinase_FGGY"/>
</dbReference>
<dbReference type="InterPro" id="IPR018483">
    <property type="entry name" value="Carb_kinase_FGGY_CS"/>
</dbReference>
<dbReference type="InterPro" id="IPR018485">
    <property type="entry name" value="FGGY_C"/>
</dbReference>
<dbReference type="InterPro" id="IPR018484">
    <property type="entry name" value="FGGY_N"/>
</dbReference>
<dbReference type="InterPro" id="IPR005999">
    <property type="entry name" value="Glycerol_kin"/>
</dbReference>
<dbReference type="NCBIfam" id="TIGR01311">
    <property type="entry name" value="glycerol_kin"/>
    <property type="match status" value="1"/>
</dbReference>
<dbReference type="NCBIfam" id="NF000756">
    <property type="entry name" value="PRK00047.1"/>
    <property type="match status" value="1"/>
</dbReference>
<dbReference type="PANTHER" id="PTHR10196:SF69">
    <property type="entry name" value="GLYCEROL KINASE"/>
    <property type="match status" value="1"/>
</dbReference>
<dbReference type="PANTHER" id="PTHR10196">
    <property type="entry name" value="SUGAR KINASE"/>
    <property type="match status" value="1"/>
</dbReference>
<dbReference type="Pfam" id="PF02782">
    <property type="entry name" value="FGGY_C"/>
    <property type="match status" value="1"/>
</dbReference>
<dbReference type="Pfam" id="PF00370">
    <property type="entry name" value="FGGY_N"/>
    <property type="match status" value="1"/>
</dbReference>
<dbReference type="PIRSF" id="PIRSF000538">
    <property type="entry name" value="GlpK"/>
    <property type="match status" value="1"/>
</dbReference>
<dbReference type="SUPFAM" id="SSF53067">
    <property type="entry name" value="Actin-like ATPase domain"/>
    <property type="match status" value="2"/>
</dbReference>
<dbReference type="PROSITE" id="PS00445">
    <property type="entry name" value="FGGY_KINASES_2"/>
    <property type="match status" value="1"/>
</dbReference>
<name>GLPK_STAAN</name>
<accession>P99113</accession>
<accession>Q99UH3</accession>
<comment type="function">
    <text evidence="1">Key enzyme in the regulation of glycerol uptake and metabolism. Catalyzes the phosphorylation of glycerol to yield sn-glycerol 3-phosphate.</text>
</comment>
<comment type="catalytic activity">
    <reaction evidence="1">
        <text>glycerol + ATP = sn-glycerol 3-phosphate + ADP + H(+)</text>
        <dbReference type="Rhea" id="RHEA:21644"/>
        <dbReference type="ChEBI" id="CHEBI:15378"/>
        <dbReference type="ChEBI" id="CHEBI:17754"/>
        <dbReference type="ChEBI" id="CHEBI:30616"/>
        <dbReference type="ChEBI" id="CHEBI:57597"/>
        <dbReference type="ChEBI" id="CHEBI:456216"/>
        <dbReference type="EC" id="2.7.1.30"/>
    </reaction>
</comment>
<comment type="activity regulation">
    <text evidence="1">Activated by phosphorylation and inhibited by fructose 1,6-bisphosphate (FBP).</text>
</comment>
<comment type="pathway">
    <text evidence="1">Polyol metabolism; glycerol degradation via glycerol kinase pathway; sn-glycerol 3-phosphate from glycerol: step 1/1.</text>
</comment>
<comment type="subunit">
    <text evidence="1">Homotetramer and homodimer (in equilibrium).</text>
</comment>
<comment type="PTM">
    <text evidence="1">The phosphoenolpyruvate-dependent sugar phosphotransferase system (PTS), including enzyme I, and histidine-containing protein (HPr) are required for the phosphorylation, which leads to the activation of the enzyme.</text>
</comment>
<comment type="similarity">
    <text evidence="1">Belongs to the FGGY kinase family.</text>
</comment>
<proteinExistence type="evidence at protein level"/>
<keyword id="KW-0067">ATP-binding</keyword>
<keyword id="KW-0319">Glycerol metabolism</keyword>
<keyword id="KW-0418">Kinase</keyword>
<keyword id="KW-0547">Nucleotide-binding</keyword>
<keyword id="KW-0597">Phosphoprotein</keyword>
<keyword id="KW-0808">Transferase</keyword>
<evidence type="ECO:0000255" key="1">
    <source>
        <dbReference type="HAMAP-Rule" id="MF_00186"/>
    </source>
</evidence>